<gene>
    <name evidence="2" type="primary">rpmF</name>
    <name type="ordered locus">VV1_3013</name>
</gene>
<accession>Q8D8G4</accession>
<feature type="initiator methionine" description="Removed" evidence="1">
    <location>
        <position position="1"/>
    </location>
</feature>
<feature type="chain" id="PRO_0000172436" description="Large ribosomal subunit protein bL32">
    <location>
        <begin position="2"/>
        <end position="56"/>
    </location>
</feature>
<feature type="region of interest" description="Disordered" evidence="3">
    <location>
        <begin position="1"/>
        <end position="28"/>
    </location>
</feature>
<feature type="compositionally biased region" description="Basic residues" evidence="3">
    <location>
        <begin position="7"/>
        <end position="16"/>
    </location>
</feature>
<organism>
    <name type="scientific">Vibrio vulnificus (strain CMCP6)</name>
    <dbReference type="NCBI Taxonomy" id="216895"/>
    <lineage>
        <taxon>Bacteria</taxon>
        <taxon>Pseudomonadati</taxon>
        <taxon>Pseudomonadota</taxon>
        <taxon>Gammaproteobacteria</taxon>
        <taxon>Vibrionales</taxon>
        <taxon>Vibrionaceae</taxon>
        <taxon>Vibrio</taxon>
    </lineage>
</organism>
<evidence type="ECO:0000250" key="1"/>
<evidence type="ECO:0000255" key="2">
    <source>
        <dbReference type="HAMAP-Rule" id="MF_00340"/>
    </source>
</evidence>
<evidence type="ECO:0000256" key="3">
    <source>
        <dbReference type="SAM" id="MobiDB-lite"/>
    </source>
</evidence>
<evidence type="ECO:0000305" key="4"/>
<proteinExistence type="inferred from homology"/>
<sequence length="56" mass="6298">MAVQQNRKTRSKRGMRRSHDALTTAALSVDATSGETHLRHNVTAEGYYRGKKVINK</sequence>
<name>RL32_VIBVU</name>
<comment type="similarity">
    <text evidence="2">Belongs to the bacterial ribosomal protein bL32 family.</text>
</comment>
<keyword id="KW-0687">Ribonucleoprotein</keyword>
<keyword id="KW-0689">Ribosomal protein</keyword>
<dbReference type="EMBL" id="AE016795">
    <property type="protein sequence ID" value="AAO11340.1"/>
    <property type="molecule type" value="Genomic_DNA"/>
</dbReference>
<dbReference type="RefSeq" id="WP_011080823.1">
    <property type="nucleotide sequence ID" value="NC_004459.3"/>
</dbReference>
<dbReference type="SMR" id="Q8D8G4"/>
<dbReference type="GeneID" id="93894223"/>
<dbReference type="KEGG" id="vvu:VV1_3013"/>
<dbReference type="HOGENOM" id="CLU_129084_2_1_6"/>
<dbReference type="Proteomes" id="UP000002275">
    <property type="component" value="Chromosome 1"/>
</dbReference>
<dbReference type="GO" id="GO:0015934">
    <property type="term" value="C:large ribosomal subunit"/>
    <property type="evidence" value="ECO:0007669"/>
    <property type="project" value="InterPro"/>
</dbReference>
<dbReference type="GO" id="GO:0003735">
    <property type="term" value="F:structural constituent of ribosome"/>
    <property type="evidence" value="ECO:0007669"/>
    <property type="project" value="InterPro"/>
</dbReference>
<dbReference type="GO" id="GO:0006412">
    <property type="term" value="P:translation"/>
    <property type="evidence" value="ECO:0007669"/>
    <property type="project" value="UniProtKB-UniRule"/>
</dbReference>
<dbReference type="HAMAP" id="MF_00340">
    <property type="entry name" value="Ribosomal_bL32"/>
    <property type="match status" value="1"/>
</dbReference>
<dbReference type="InterPro" id="IPR002677">
    <property type="entry name" value="Ribosomal_bL32"/>
</dbReference>
<dbReference type="InterPro" id="IPR044957">
    <property type="entry name" value="Ribosomal_bL32_bact"/>
</dbReference>
<dbReference type="InterPro" id="IPR011332">
    <property type="entry name" value="Ribosomal_zn-bd"/>
</dbReference>
<dbReference type="NCBIfam" id="TIGR01031">
    <property type="entry name" value="rpmF_bact"/>
    <property type="match status" value="1"/>
</dbReference>
<dbReference type="PANTHER" id="PTHR35534">
    <property type="entry name" value="50S RIBOSOMAL PROTEIN L32"/>
    <property type="match status" value="1"/>
</dbReference>
<dbReference type="PANTHER" id="PTHR35534:SF1">
    <property type="entry name" value="LARGE RIBOSOMAL SUBUNIT PROTEIN BL32"/>
    <property type="match status" value="1"/>
</dbReference>
<dbReference type="Pfam" id="PF01783">
    <property type="entry name" value="Ribosomal_L32p"/>
    <property type="match status" value="1"/>
</dbReference>
<dbReference type="SUPFAM" id="SSF57829">
    <property type="entry name" value="Zn-binding ribosomal proteins"/>
    <property type="match status" value="1"/>
</dbReference>
<protein>
    <recommendedName>
        <fullName evidence="2">Large ribosomal subunit protein bL32</fullName>
    </recommendedName>
    <alternativeName>
        <fullName evidence="4">50S ribosomal protein L32</fullName>
    </alternativeName>
</protein>
<reference key="1">
    <citation type="submission" date="2002-12" db="EMBL/GenBank/DDBJ databases">
        <title>Complete genome sequence of Vibrio vulnificus CMCP6.</title>
        <authorList>
            <person name="Rhee J.H."/>
            <person name="Kim S.Y."/>
            <person name="Chung S.S."/>
            <person name="Kim J.J."/>
            <person name="Moon Y.H."/>
            <person name="Jeong H."/>
            <person name="Choy H.E."/>
        </authorList>
    </citation>
    <scope>NUCLEOTIDE SEQUENCE [LARGE SCALE GENOMIC DNA]</scope>
    <source>
        <strain>CMCP6</strain>
    </source>
</reference>